<dbReference type="EMBL" id="CP000478">
    <property type="protein sequence ID" value="ABK17466.1"/>
    <property type="status" value="ALT_INIT"/>
    <property type="molecule type" value="Genomic_DNA"/>
</dbReference>
<dbReference type="RefSeq" id="WP_041440215.1">
    <property type="nucleotide sequence ID" value="NC_008554.1"/>
</dbReference>
<dbReference type="SMR" id="A0LJ64"/>
<dbReference type="FunCoup" id="A0LJ64">
    <property type="interactions" value="568"/>
</dbReference>
<dbReference type="STRING" id="335543.Sfum_1779"/>
<dbReference type="KEGG" id="sfu:Sfum_1779"/>
<dbReference type="eggNOG" id="COG0264">
    <property type="taxonomic scope" value="Bacteria"/>
</dbReference>
<dbReference type="HOGENOM" id="CLU_047155_1_1_7"/>
<dbReference type="InParanoid" id="A0LJ64"/>
<dbReference type="OrthoDB" id="9808348at2"/>
<dbReference type="Proteomes" id="UP000001784">
    <property type="component" value="Chromosome"/>
</dbReference>
<dbReference type="GO" id="GO:0005737">
    <property type="term" value="C:cytoplasm"/>
    <property type="evidence" value="ECO:0007669"/>
    <property type="project" value="UniProtKB-SubCell"/>
</dbReference>
<dbReference type="GO" id="GO:0003746">
    <property type="term" value="F:translation elongation factor activity"/>
    <property type="evidence" value="ECO:0007669"/>
    <property type="project" value="UniProtKB-UniRule"/>
</dbReference>
<dbReference type="CDD" id="cd14275">
    <property type="entry name" value="UBA_EF-Ts"/>
    <property type="match status" value="1"/>
</dbReference>
<dbReference type="FunFam" id="1.10.286.20:FF:000001">
    <property type="entry name" value="Elongation factor Ts"/>
    <property type="match status" value="1"/>
</dbReference>
<dbReference type="FunFam" id="1.10.8.10:FF:000001">
    <property type="entry name" value="Elongation factor Ts"/>
    <property type="match status" value="1"/>
</dbReference>
<dbReference type="Gene3D" id="1.10.286.20">
    <property type="match status" value="1"/>
</dbReference>
<dbReference type="Gene3D" id="1.10.8.10">
    <property type="entry name" value="DNA helicase RuvA subunit, C-terminal domain"/>
    <property type="match status" value="1"/>
</dbReference>
<dbReference type="Gene3D" id="3.30.479.20">
    <property type="entry name" value="Elongation factor Ts, dimerisation domain"/>
    <property type="match status" value="1"/>
</dbReference>
<dbReference type="HAMAP" id="MF_00050">
    <property type="entry name" value="EF_Ts"/>
    <property type="match status" value="1"/>
</dbReference>
<dbReference type="InterPro" id="IPR036402">
    <property type="entry name" value="EF-Ts_dimer_sf"/>
</dbReference>
<dbReference type="InterPro" id="IPR001816">
    <property type="entry name" value="Transl_elong_EFTs/EF1B"/>
</dbReference>
<dbReference type="InterPro" id="IPR014039">
    <property type="entry name" value="Transl_elong_EFTs/EF1B_dimer"/>
</dbReference>
<dbReference type="InterPro" id="IPR018101">
    <property type="entry name" value="Transl_elong_Ts_CS"/>
</dbReference>
<dbReference type="InterPro" id="IPR009060">
    <property type="entry name" value="UBA-like_sf"/>
</dbReference>
<dbReference type="NCBIfam" id="TIGR00116">
    <property type="entry name" value="tsf"/>
    <property type="match status" value="1"/>
</dbReference>
<dbReference type="PANTHER" id="PTHR11741">
    <property type="entry name" value="ELONGATION FACTOR TS"/>
    <property type="match status" value="1"/>
</dbReference>
<dbReference type="PANTHER" id="PTHR11741:SF0">
    <property type="entry name" value="ELONGATION FACTOR TS, MITOCHONDRIAL"/>
    <property type="match status" value="1"/>
</dbReference>
<dbReference type="Pfam" id="PF00889">
    <property type="entry name" value="EF_TS"/>
    <property type="match status" value="1"/>
</dbReference>
<dbReference type="SUPFAM" id="SSF54713">
    <property type="entry name" value="Elongation factor Ts (EF-Ts), dimerisation domain"/>
    <property type="match status" value="1"/>
</dbReference>
<dbReference type="SUPFAM" id="SSF46934">
    <property type="entry name" value="UBA-like"/>
    <property type="match status" value="1"/>
</dbReference>
<dbReference type="PROSITE" id="PS01126">
    <property type="entry name" value="EF_TS_1"/>
    <property type="match status" value="1"/>
</dbReference>
<dbReference type="PROSITE" id="PS01127">
    <property type="entry name" value="EF_TS_2"/>
    <property type="match status" value="1"/>
</dbReference>
<feature type="chain" id="PRO_0000323472" description="Elongation factor Ts">
    <location>
        <begin position="1"/>
        <end position="200"/>
    </location>
</feature>
<feature type="region of interest" description="Involved in Mg(2+) ion dislocation from EF-Tu" evidence="1">
    <location>
        <begin position="83"/>
        <end position="86"/>
    </location>
</feature>
<accession>A0LJ64</accession>
<gene>
    <name evidence="1" type="primary">tsf</name>
    <name type="ordered locus">Sfum_1779</name>
</gene>
<comment type="function">
    <text evidence="1">Associates with the EF-Tu.GDP complex and induces the exchange of GDP to GTP. It remains bound to the aminoacyl-tRNA.EF-Tu.GTP complex up to the GTP hydrolysis stage on the ribosome.</text>
</comment>
<comment type="subcellular location">
    <subcellularLocation>
        <location evidence="1">Cytoplasm</location>
    </subcellularLocation>
</comment>
<comment type="similarity">
    <text evidence="1">Belongs to the EF-Ts family.</text>
</comment>
<comment type="sequence caution" evidence="2">
    <conflict type="erroneous initiation">
        <sequence resource="EMBL-CDS" id="ABK17466"/>
    </conflict>
</comment>
<organism>
    <name type="scientific">Syntrophobacter fumaroxidans (strain DSM 10017 / MPOB)</name>
    <dbReference type="NCBI Taxonomy" id="335543"/>
    <lineage>
        <taxon>Bacteria</taxon>
        <taxon>Pseudomonadati</taxon>
        <taxon>Thermodesulfobacteriota</taxon>
        <taxon>Syntrophobacteria</taxon>
        <taxon>Syntrophobacterales</taxon>
        <taxon>Syntrophobacteraceae</taxon>
        <taxon>Syntrophobacter</taxon>
    </lineage>
</organism>
<name>EFTS_SYNFM</name>
<evidence type="ECO:0000255" key="1">
    <source>
        <dbReference type="HAMAP-Rule" id="MF_00050"/>
    </source>
</evidence>
<evidence type="ECO:0000305" key="2"/>
<proteinExistence type="inferred from homology"/>
<sequence length="200" mass="22287">MTLEITAAMVKDLREKTNVGMMDCKKALQETGGDLEKAVDLLRQKGLAKAMKRAGKEASEGMVHAYIHAGGRIGVLIEVNCETDFAAKSEDFVEFVKNVAMQVAATNPLGIVPEDISQDVVERERAIYLAQAQESGKPQNILEKMVEGKMRKFFEESTLLQQSYVKDPDKTIQDYLNELTASIGEKIIIRRFARFQLGSE</sequence>
<protein>
    <recommendedName>
        <fullName evidence="1">Elongation factor Ts</fullName>
        <shortName evidence="1">EF-Ts</shortName>
    </recommendedName>
</protein>
<reference key="1">
    <citation type="submission" date="2006-10" db="EMBL/GenBank/DDBJ databases">
        <title>Complete sequence of Syntrophobacter fumaroxidans MPOB.</title>
        <authorList>
            <consortium name="US DOE Joint Genome Institute"/>
            <person name="Copeland A."/>
            <person name="Lucas S."/>
            <person name="Lapidus A."/>
            <person name="Barry K."/>
            <person name="Detter J.C."/>
            <person name="Glavina del Rio T."/>
            <person name="Hammon N."/>
            <person name="Israni S."/>
            <person name="Pitluck S."/>
            <person name="Goltsman E.G."/>
            <person name="Martinez M."/>
            <person name="Schmutz J."/>
            <person name="Larimer F."/>
            <person name="Land M."/>
            <person name="Hauser L."/>
            <person name="Kyrpides N."/>
            <person name="Kim E."/>
            <person name="Boone D.R."/>
            <person name="Brockman F."/>
            <person name="Culley D."/>
            <person name="Ferry J."/>
            <person name="Gunsalus R."/>
            <person name="McInerney M.J."/>
            <person name="Morrison M."/>
            <person name="Plugge C."/>
            <person name="Rohlin L."/>
            <person name="Scholten J."/>
            <person name="Sieber J."/>
            <person name="Stams A.J.M."/>
            <person name="Worm P."/>
            <person name="Henstra A.M."/>
            <person name="Richardson P."/>
        </authorList>
    </citation>
    <scope>NUCLEOTIDE SEQUENCE [LARGE SCALE GENOMIC DNA]</scope>
    <source>
        <strain>DSM 10017 / MPOB</strain>
    </source>
</reference>
<keyword id="KW-0963">Cytoplasm</keyword>
<keyword id="KW-0251">Elongation factor</keyword>
<keyword id="KW-0648">Protein biosynthesis</keyword>
<keyword id="KW-1185">Reference proteome</keyword>